<name>MURC_FRAT1</name>
<protein>
    <recommendedName>
        <fullName evidence="1">UDP-N-acetylmuramate--L-alanine ligase</fullName>
        <ecNumber evidence="1">6.3.2.8</ecNumber>
    </recommendedName>
    <alternativeName>
        <fullName evidence="1">UDP-N-acetylmuramoyl-L-alanine synthetase</fullName>
    </alternativeName>
</protein>
<dbReference type="EC" id="6.3.2.8" evidence="1"/>
<dbReference type="EMBL" id="AM286280">
    <property type="protein sequence ID" value="CAL08255.1"/>
    <property type="molecule type" value="Genomic_DNA"/>
</dbReference>
<dbReference type="RefSeq" id="WP_003021772.1">
    <property type="nucleotide sequence ID" value="NC_008245.1"/>
</dbReference>
<dbReference type="SMR" id="Q14JK2"/>
<dbReference type="KEGG" id="ftf:FTF0239"/>
<dbReference type="HOGENOM" id="CLU_028104_2_2_6"/>
<dbReference type="UniPathway" id="UPA00219"/>
<dbReference type="GO" id="GO:0005737">
    <property type="term" value="C:cytoplasm"/>
    <property type="evidence" value="ECO:0007669"/>
    <property type="project" value="UniProtKB-SubCell"/>
</dbReference>
<dbReference type="GO" id="GO:0005524">
    <property type="term" value="F:ATP binding"/>
    <property type="evidence" value="ECO:0007669"/>
    <property type="project" value="UniProtKB-UniRule"/>
</dbReference>
<dbReference type="GO" id="GO:0008763">
    <property type="term" value="F:UDP-N-acetylmuramate-L-alanine ligase activity"/>
    <property type="evidence" value="ECO:0007669"/>
    <property type="project" value="UniProtKB-UniRule"/>
</dbReference>
<dbReference type="GO" id="GO:0051301">
    <property type="term" value="P:cell division"/>
    <property type="evidence" value="ECO:0007669"/>
    <property type="project" value="UniProtKB-KW"/>
</dbReference>
<dbReference type="GO" id="GO:0071555">
    <property type="term" value="P:cell wall organization"/>
    <property type="evidence" value="ECO:0007669"/>
    <property type="project" value="UniProtKB-KW"/>
</dbReference>
<dbReference type="GO" id="GO:0009252">
    <property type="term" value="P:peptidoglycan biosynthetic process"/>
    <property type="evidence" value="ECO:0007669"/>
    <property type="project" value="UniProtKB-UniRule"/>
</dbReference>
<dbReference type="GO" id="GO:0008360">
    <property type="term" value="P:regulation of cell shape"/>
    <property type="evidence" value="ECO:0007669"/>
    <property type="project" value="UniProtKB-KW"/>
</dbReference>
<dbReference type="Gene3D" id="3.90.190.20">
    <property type="entry name" value="Mur ligase, C-terminal domain"/>
    <property type="match status" value="1"/>
</dbReference>
<dbReference type="Gene3D" id="3.40.1190.10">
    <property type="entry name" value="Mur-like, catalytic domain"/>
    <property type="match status" value="1"/>
</dbReference>
<dbReference type="Gene3D" id="3.40.50.720">
    <property type="entry name" value="NAD(P)-binding Rossmann-like Domain"/>
    <property type="match status" value="1"/>
</dbReference>
<dbReference type="HAMAP" id="MF_00046">
    <property type="entry name" value="MurC"/>
    <property type="match status" value="1"/>
</dbReference>
<dbReference type="InterPro" id="IPR036565">
    <property type="entry name" value="Mur-like_cat_sf"/>
</dbReference>
<dbReference type="InterPro" id="IPR004101">
    <property type="entry name" value="Mur_ligase_C"/>
</dbReference>
<dbReference type="InterPro" id="IPR036615">
    <property type="entry name" value="Mur_ligase_C_dom_sf"/>
</dbReference>
<dbReference type="InterPro" id="IPR013221">
    <property type="entry name" value="Mur_ligase_cen"/>
</dbReference>
<dbReference type="InterPro" id="IPR000713">
    <property type="entry name" value="Mur_ligase_N"/>
</dbReference>
<dbReference type="InterPro" id="IPR050061">
    <property type="entry name" value="MurCDEF_pg_biosynth"/>
</dbReference>
<dbReference type="InterPro" id="IPR005758">
    <property type="entry name" value="UDP-N-AcMur_Ala_ligase_MurC"/>
</dbReference>
<dbReference type="NCBIfam" id="TIGR01082">
    <property type="entry name" value="murC"/>
    <property type="match status" value="1"/>
</dbReference>
<dbReference type="PANTHER" id="PTHR43445:SF3">
    <property type="entry name" value="UDP-N-ACETYLMURAMATE--L-ALANINE LIGASE"/>
    <property type="match status" value="1"/>
</dbReference>
<dbReference type="PANTHER" id="PTHR43445">
    <property type="entry name" value="UDP-N-ACETYLMURAMATE--L-ALANINE LIGASE-RELATED"/>
    <property type="match status" value="1"/>
</dbReference>
<dbReference type="Pfam" id="PF01225">
    <property type="entry name" value="Mur_ligase"/>
    <property type="match status" value="1"/>
</dbReference>
<dbReference type="Pfam" id="PF02875">
    <property type="entry name" value="Mur_ligase_C"/>
    <property type="match status" value="1"/>
</dbReference>
<dbReference type="Pfam" id="PF08245">
    <property type="entry name" value="Mur_ligase_M"/>
    <property type="match status" value="1"/>
</dbReference>
<dbReference type="SUPFAM" id="SSF51984">
    <property type="entry name" value="MurCD N-terminal domain"/>
    <property type="match status" value="1"/>
</dbReference>
<dbReference type="SUPFAM" id="SSF53623">
    <property type="entry name" value="MurD-like peptide ligases, catalytic domain"/>
    <property type="match status" value="1"/>
</dbReference>
<dbReference type="SUPFAM" id="SSF53244">
    <property type="entry name" value="MurD-like peptide ligases, peptide-binding domain"/>
    <property type="match status" value="1"/>
</dbReference>
<organism>
    <name type="scientific">Francisella tularensis subsp. tularensis (strain FSC 198)</name>
    <dbReference type="NCBI Taxonomy" id="393115"/>
    <lineage>
        <taxon>Bacteria</taxon>
        <taxon>Pseudomonadati</taxon>
        <taxon>Pseudomonadota</taxon>
        <taxon>Gammaproteobacteria</taxon>
        <taxon>Thiotrichales</taxon>
        <taxon>Francisellaceae</taxon>
        <taxon>Francisella</taxon>
    </lineage>
</organism>
<accession>Q14JK2</accession>
<keyword id="KW-0067">ATP-binding</keyword>
<keyword id="KW-0131">Cell cycle</keyword>
<keyword id="KW-0132">Cell division</keyword>
<keyword id="KW-0133">Cell shape</keyword>
<keyword id="KW-0961">Cell wall biogenesis/degradation</keyword>
<keyword id="KW-0963">Cytoplasm</keyword>
<keyword id="KW-0436">Ligase</keyword>
<keyword id="KW-0547">Nucleotide-binding</keyword>
<keyword id="KW-0573">Peptidoglycan synthesis</keyword>
<feature type="chain" id="PRO_1000004343" description="UDP-N-acetylmuramate--L-alanine ligase">
    <location>
        <begin position="1"/>
        <end position="451"/>
    </location>
</feature>
<feature type="binding site" evidence="1">
    <location>
        <begin position="110"/>
        <end position="116"/>
    </location>
    <ligand>
        <name>ATP</name>
        <dbReference type="ChEBI" id="CHEBI:30616"/>
    </ligand>
</feature>
<proteinExistence type="inferred from homology"/>
<reference key="1">
    <citation type="journal article" date="2007" name="PLoS ONE">
        <title>Genome sequencing shows that European isolates of Francisella tularensis subspecies tularensis are almost identical to US laboratory strain Schu S4.</title>
        <authorList>
            <person name="Chaudhuri R.R."/>
            <person name="Ren C.-P."/>
            <person name="Desmond L."/>
            <person name="Vincent G.A."/>
            <person name="Silman N.J."/>
            <person name="Brehm J.K."/>
            <person name="Elmore M.J."/>
            <person name="Hudson M.J."/>
            <person name="Forsman M."/>
            <person name="Isherwood K.E."/>
            <person name="Gurycova D."/>
            <person name="Minton N.P."/>
            <person name="Titball R.W."/>
            <person name="Pallen M.J."/>
            <person name="Vipond R."/>
        </authorList>
    </citation>
    <scope>NUCLEOTIDE SEQUENCE [LARGE SCALE GENOMIC DNA]</scope>
    <source>
        <strain>FSC 198</strain>
    </source>
</reference>
<sequence length="451" mass="49804">MNKKILFLGVGGIGVSALAIAAKRLGAHVAGYDSVANKLTAKLEALGIVIFTSPNGVDVANFDIVVYSSAILSSHPLLSQARSLGIQCLQRAMFLAVLMKDFSYSIAITGTHGKTTTSSVLATLLCQLDKYSSFIVGGVVKYADSNIQVNGTDKLVIEADESDASFLFLSPQVVIITNIDLDHMATYNNSYQTLLENFTDFVSKESVKSIYLCVDDQGCRDLLAKYNQSDKNVTSYGFSINADVQIYDYHIIDEITHFKIRYKDDDLSFKLQLPGRYNVQNATACIIACLDLGFKYEDIRNALIKVTGVARRFDLYTKVISGHQVTVIDDYGHHPVEVANSISAVRDRYPNKKIIHVFQPHRYTRNRDLIKDWPKALSLADQLILLPTYSADEQIIKGAESQDIVKGLSGYLLADGFDHAIYFLEKLANENTVILIQGAGDVTNLVEILSE</sequence>
<comment type="function">
    <text evidence="1">Cell wall formation.</text>
</comment>
<comment type="catalytic activity">
    <reaction evidence="1">
        <text>UDP-N-acetyl-alpha-D-muramate + L-alanine + ATP = UDP-N-acetyl-alpha-D-muramoyl-L-alanine + ADP + phosphate + H(+)</text>
        <dbReference type="Rhea" id="RHEA:23372"/>
        <dbReference type="ChEBI" id="CHEBI:15378"/>
        <dbReference type="ChEBI" id="CHEBI:30616"/>
        <dbReference type="ChEBI" id="CHEBI:43474"/>
        <dbReference type="ChEBI" id="CHEBI:57972"/>
        <dbReference type="ChEBI" id="CHEBI:70757"/>
        <dbReference type="ChEBI" id="CHEBI:83898"/>
        <dbReference type="ChEBI" id="CHEBI:456216"/>
        <dbReference type="EC" id="6.3.2.8"/>
    </reaction>
</comment>
<comment type="pathway">
    <text evidence="1">Cell wall biogenesis; peptidoglycan biosynthesis.</text>
</comment>
<comment type="subcellular location">
    <subcellularLocation>
        <location evidence="1">Cytoplasm</location>
    </subcellularLocation>
</comment>
<comment type="similarity">
    <text evidence="1">Belongs to the MurCDEF family.</text>
</comment>
<evidence type="ECO:0000255" key="1">
    <source>
        <dbReference type="HAMAP-Rule" id="MF_00046"/>
    </source>
</evidence>
<gene>
    <name evidence="1" type="primary">murC</name>
    <name type="ordered locus">FTF0239</name>
</gene>